<protein>
    <recommendedName>
        <fullName evidence="1">Elongation factor 4</fullName>
        <shortName evidence="1">EF-4</shortName>
        <ecNumber evidence="1">3.6.5.n1</ecNumber>
    </recommendedName>
    <alternativeName>
        <fullName evidence="1">Ribosomal back-translocase LepA</fullName>
    </alternativeName>
</protein>
<evidence type="ECO:0000255" key="1">
    <source>
        <dbReference type="HAMAP-Rule" id="MF_00071"/>
    </source>
</evidence>
<gene>
    <name evidence="1" type="primary">lepA</name>
    <name type="synonym">yqeQ</name>
    <name type="synonym">yqxB</name>
    <name type="ordered locus">BSU25510</name>
</gene>
<reference key="1">
    <citation type="journal article" date="1996" name="Microbiology">
        <title>The genes of lepA and hemN form a bicistronic operon in Bacillus subtilis.</title>
        <authorList>
            <person name="Homuth G."/>
            <person name="Heinemann M."/>
            <person name="Zuber U."/>
            <person name="Schumann W."/>
        </authorList>
    </citation>
    <scope>NUCLEOTIDE SEQUENCE [GENOMIC DNA]</scope>
    <source>
        <strain>168</strain>
    </source>
</reference>
<reference key="2">
    <citation type="journal article" date="1996" name="Microbiology">
        <title>Systematic sequencing of the 283 kb 210 degrees-232 degrees region of the Bacillus subtilis genome containing the skin element and many sporulation genes.</title>
        <authorList>
            <person name="Mizuno M."/>
            <person name="Masuda S."/>
            <person name="Takemaru K."/>
            <person name="Hosono S."/>
            <person name="Sato T."/>
            <person name="Takeuchi M."/>
            <person name="Kobayashi Y."/>
        </authorList>
    </citation>
    <scope>NUCLEOTIDE SEQUENCE [GENOMIC DNA]</scope>
    <source>
        <strain>168 / JH642</strain>
    </source>
</reference>
<reference key="3">
    <citation type="journal article" date="1997" name="Nature">
        <title>The complete genome sequence of the Gram-positive bacterium Bacillus subtilis.</title>
        <authorList>
            <person name="Kunst F."/>
            <person name="Ogasawara N."/>
            <person name="Moszer I."/>
            <person name="Albertini A.M."/>
            <person name="Alloni G."/>
            <person name="Azevedo V."/>
            <person name="Bertero M.G."/>
            <person name="Bessieres P."/>
            <person name="Bolotin A."/>
            <person name="Borchert S."/>
            <person name="Borriss R."/>
            <person name="Boursier L."/>
            <person name="Brans A."/>
            <person name="Braun M."/>
            <person name="Brignell S.C."/>
            <person name="Bron S."/>
            <person name="Brouillet S."/>
            <person name="Bruschi C.V."/>
            <person name="Caldwell B."/>
            <person name="Capuano V."/>
            <person name="Carter N.M."/>
            <person name="Choi S.-K."/>
            <person name="Codani J.-J."/>
            <person name="Connerton I.F."/>
            <person name="Cummings N.J."/>
            <person name="Daniel R.A."/>
            <person name="Denizot F."/>
            <person name="Devine K.M."/>
            <person name="Duesterhoeft A."/>
            <person name="Ehrlich S.D."/>
            <person name="Emmerson P.T."/>
            <person name="Entian K.-D."/>
            <person name="Errington J."/>
            <person name="Fabret C."/>
            <person name="Ferrari E."/>
            <person name="Foulger D."/>
            <person name="Fritz C."/>
            <person name="Fujita M."/>
            <person name="Fujita Y."/>
            <person name="Fuma S."/>
            <person name="Galizzi A."/>
            <person name="Galleron N."/>
            <person name="Ghim S.-Y."/>
            <person name="Glaser P."/>
            <person name="Goffeau A."/>
            <person name="Golightly E.J."/>
            <person name="Grandi G."/>
            <person name="Guiseppi G."/>
            <person name="Guy B.J."/>
            <person name="Haga K."/>
            <person name="Haiech J."/>
            <person name="Harwood C.R."/>
            <person name="Henaut A."/>
            <person name="Hilbert H."/>
            <person name="Holsappel S."/>
            <person name="Hosono S."/>
            <person name="Hullo M.-F."/>
            <person name="Itaya M."/>
            <person name="Jones L.-M."/>
            <person name="Joris B."/>
            <person name="Karamata D."/>
            <person name="Kasahara Y."/>
            <person name="Klaerr-Blanchard M."/>
            <person name="Klein C."/>
            <person name="Kobayashi Y."/>
            <person name="Koetter P."/>
            <person name="Koningstein G."/>
            <person name="Krogh S."/>
            <person name="Kumano M."/>
            <person name="Kurita K."/>
            <person name="Lapidus A."/>
            <person name="Lardinois S."/>
            <person name="Lauber J."/>
            <person name="Lazarevic V."/>
            <person name="Lee S.-M."/>
            <person name="Levine A."/>
            <person name="Liu H."/>
            <person name="Masuda S."/>
            <person name="Mauel C."/>
            <person name="Medigue C."/>
            <person name="Medina N."/>
            <person name="Mellado R.P."/>
            <person name="Mizuno M."/>
            <person name="Moestl D."/>
            <person name="Nakai S."/>
            <person name="Noback M."/>
            <person name="Noone D."/>
            <person name="O'Reilly M."/>
            <person name="Ogawa K."/>
            <person name="Ogiwara A."/>
            <person name="Oudega B."/>
            <person name="Park S.-H."/>
            <person name="Parro V."/>
            <person name="Pohl T.M."/>
            <person name="Portetelle D."/>
            <person name="Porwollik S."/>
            <person name="Prescott A.M."/>
            <person name="Presecan E."/>
            <person name="Pujic P."/>
            <person name="Purnelle B."/>
            <person name="Rapoport G."/>
            <person name="Rey M."/>
            <person name="Reynolds S."/>
            <person name="Rieger M."/>
            <person name="Rivolta C."/>
            <person name="Rocha E."/>
            <person name="Roche B."/>
            <person name="Rose M."/>
            <person name="Sadaie Y."/>
            <person name="Sato T."/>
            <person name="Scanlan E."/>
            <person name="Schleich S."/>
            <person name="Schroeter R."/>
            <person name="Scoffone F."/>
            <person name="Sekiguchi J."/>
            <person name="Sekowska A."/>
            <person name="Seror S.J."/>
            <person name="Serror P."/>
            <person name="Shin B.-S."/>
            <person name="Soldo B."/>
            <person name="Sorokin A."/>
            <person name="Tacconi E."/>
            <person name="Takagi T."/>
            <person name="Takahashi H."/>
            <person name="Takemaru K."/>
            <person name="Takeuchi M."/>
            <person name="Tamakoshi A."/>
            <person name="Tanaka T."/>
            <person name="Terpstra P."/>
            <person name="Tognoni A."/>
            <person name="Tosato V."/>
            <person name="Uchiyama S."/>
            <person name="Vandenbol M."/>
            <person name="Vannier F."/>
            <person name="Vassarotti A."/>
            <person name="Viari A."/>
            <person name="Wambutt R."/>
            <person name="Wedler E."/>
            <person name="Wedler H."/>
            <person name="Weitzenegger T."/>
            <person name="Winters P."/>
            <person name="Wipat A."/>
            <person name="Yamamoto H."/>
            <person name="Yamane K."/>
            <person name="Yasumoto K."/>
            <person name="Yata K."/>
            <person name="Yoshida K."/>
            <person name="Yoshikawa H.-F."/>
            <person name="Zumstein E."/>
            <person name="Yoshikawa H."/>
            <person name="Danchin A."/>
        </authorList>
    </citation>
    <scope>NUCLEOTIDE SEQUENCE [LARGE SCALE GENOMIC DNA]</scope>
    <source>
        <strain>168</strain>
    </source>
</reference>
<reference key="4">
    <citation type="submission" date="1993-09" db="EMBL/GenBank/DDBJ databases">
        <authorList>
            <person name="Takemaru K."/>
            <person name="Sato T."/>
            <person name="Kobayashi Y."/>
        </authorList>
    </citation>
    <scope>NUCLEOTIDE SEQUENCE [GENOMIC DNA] OF 1-327</scope>
    <source>
        <strain>168</strain>
    </source>
</reference>
<comment type="function">
    <text evidence="1">Required for accurate and efficient protein synthesis under certain stress conditions. May act as a fidelity factor of the translation reaction, by catalyzing a one-codon backward translocation of tRNAs on improperly translocated ribosomes. Back-translocation proceeds from a post-translocation (POST) complex to a pre-translocation (PRE) complex, thus giving elongation factor G a second chance to translocate the tRNAs correctly. Binds to ribosomes in a GTP-dependent manner.</text>
</comment>
<comment type="catalytic activity">
    <reaction evidence="1">
        <text>GTP + H2O = GDP + phosphate + H(+)</text>
        <dbReference type="Rhea" id="RHEA:19669"/>
        <dbReference type="ChEBI" id="CHEBI:15377"/>
        <dbReference type="ChEBI" id="CHEBI:15378"/>
        <dbReference type="ChEBI" id="CHEBI:37565"/>
        <dbReference type="ChEBI" id="CHEBI:43474"/>
        <dbReference type="ChEBI" id="CHEBI:58189"/>
        <dbReference type="EC" id="3.6.5.n1"/>
    </reaction>
</comment>
<comment type="subcellular location">
    <subcellularLocation>
        <location evidence="1">Cell membrane</location>
        <topology evidence="1">Peripheral membrane protein</topology>
        <orientation evidence="1">Cytoplasmic side</orientation>
    </subcellularLocation>
</comment>
<comment type="similarity">
    <text evidence="1">Belongs to the TRAFAC class translation factor GTPase superfamily. Classic translation factor GTPase family. LepA subfamily.</text>
</comment>
<keyword id="KW-1003">Cell membrane</keyword>
<keyword id="KW-0342">GTP-binding</keyword>
<keyword id="KW-0378">Hydrolase</keyword>
<keyword id="KW-0472">Membrane</keyword>
<keyword id="KW-0547">Nucleotide-binding</keyword>
<keyword id="KW-0648">Protein biosynthesis</keyword>
<keyword id="KW-1185">Reference proteome</keyword>
<feature type="chain" id="PRO_0000176232" description="Elongation factor 4">
    <location>
        <begin position="1"/>
        <end position="612"/>
    </location>
</feature>
<feature type="domain" description="tr-type G">
    <location>
        <begin position="12"/>
        <end position="194"/>
    </location>
</feature>
<feature type="binding site" evidence="1">
    <location>
        <begin position="24"/>
        <end position="29"/>
    </location>
    <ligand>
        <name>GTP</name>
        <dbReference type="ChEBI" id="CHEBI:37565"/>
    </ligand>
</feature>
<feature type="binding site" evidence="1">
    <location>
        <begin position="141"/>
        <end position="144"/>
    </location>
    <ligand>
        <name>GTP</name>
        <dbReference type="ChEBI" id="CHEBI:37565"/>
    </ligand>
</feature>
<organism>
    <name type="scientific">Bacillus subtilis (strain 168)</name>
    <dbReference type="NCBI Taxonomy" id="224308"/>
    <lineage>
        <taxon>Bacteria</taxon>
        <taxon>Bacillati</taxon>
        <taxon>Bacillota</taxon>
        <taxon>Bacilli</taxon>
        <taxon>Bacillales</taxon>
        <taxon>Bacillaceae</taxon>
        <taxon>Bacillus</taxon>
    </lineage>
</organism>
<proteinExistence type="inferred from homology"/>
<name>LEPA_BACSU</name>
<dbReference type="EC" id="3.6.5.n1" evidence="1"/>
<dbReference type="EMBL" id="X91655">
    <property type="protein sequence ID" value="CAA62842.1"/>
    <property type="molecule type" value="Genomic_DNA"/>
</dbReference>
<dbReference type="EMBL" id="D84432">
    <property type="protein sequence ID" value="BAA12460.1"/>
    <property type="molecule type" value="Genomic_DNA"/>
</dbReference>
<dbReference type="EMBL" id="AL009126">
    <property type="protein sequence ID" value="CAB14493.1"/>
    <property type="molecule type" value="Genomic_DNA"/>
</dbReference>
<dbReference type="EMBL" id="D17650">
    <property type="protein sequence ID" value="BAA04544.1"/>
    <property type="molecule type" value="Genomic_DNA"/>
</dbReference>
<dbReference type="PIR" id="G69649">
    <property type="entry name" value="G69649"/>
</dbReference>
<dbReference type="RefSeq" id="NP_390429.1">
    <property type="nucleotide sequence ID" value="NC_000964.3"/>
</dbReference>
<dbReference type="RefSeq" id="WP_003229999.1">
    <property type="nucleotide sequence ID" value="NZ_OZ025638.1"/>
</dbReference>
<dbReference type="SMR" id="P37949"/>
<dbReference type="FunCoup" id="P37949">
    <property type="interactions" value="653"/>
</dbReference>
<dbReference type="IntAct" id="P37949">
    <property type="interactions" value="1"/>
</dbReference>
<dbReference type="STRING" id="224308.BSU25510"/>
<dbReference type="jPOST" id="P37949"/>
<dbReference type="PaxDb" id="224308-BSU25510"/>
<dbReference type="EnsemblBacteria" id="CAB14493">
    <property type="protein sequence ID" value="CAB14493"/>
    <property type="gene ID" value="BSU_25510"/>
</dbReference>
<dbReference type="GeneID" id="937840"/>
<dbReference type="KEGG" id="bsu:BSU25510"/>
<dbReference type="PATRIC" id="fig|224308.179.peg.2772"/>
<dbReference type="eggNOG" id="COG0481">
    <property type="taxonomic scope" value="Bacteria"/>
</dbReference>
<dbReference type="InParanoid" id="P37949"/>
<dbReference type="OrthoDB" id="9804431at2"/>
<dbReference type="PhylomeDB" id="P37949"/>
<dbReference type="BioCyc" id="BSUB:BSU25510-MONOMER"/>
<dbReference type="Proteomes" id="UP000001570">
    <property type="component" value="Chromosome"/>
</dbReference>
<dbReference type="GO" id="GO:0005886">
    <property type="term" value="C:plasma membrane"/>
    <property type="evidence" value="ECO:0007669"/>
    <property type="project" value="UniProtKB-SubCell"/>
</dbReference>
<dbReference type="GO" id="GO:0005525">
    <property type="term" value="F:GTP binding"/>
    <property type="evidence" value="ECO:0007669"/>
    <property type="project" value="UniProtKB-UniRule"/>
</dbReference>
<dbReference type="GO" id="GO:0003924">
    <property type="term" value="F:GTPase activity"/>
    <property type="evidence" value="ECO:0007669"/>
    <property type="project" value="UniProtKB-UniRule"/>
</dbReference>
<dbReference type="GO" id="GO:0043022">
    <property type="term" value="F:ribosome binding"/>
    <property type="evidence" value="ECO:0000318"/>
    <property type="project" value="GO_Central"/>
</dbReference>
<dbReference type="GO" id="GO:0003746">
    <property type="term" value="F:translation elongation factor activity"/>
    <property type="evidence" value="ECO:0007669"/>
    <property type="project" value="UniProtKB-UniRule"/>
</dbReference>
<dbReference type="GO" id="GO:0045727">
    <property type="term" value="P:positive regulation of translation"/>
    <property type="evidence" value="ECO:0000318"/>
    <property type="project" value="GO_Central"/>
</dbReference>
<dbReference type="CDD" id="cd03699">
    <property type="entry name" value="EF4_II"/>
    <property type="match status" value="1"/>
</dbReference>
<dbReference type="CDD" id="cd16260">
    <property type="entry name" value="EF4_III"/>
    <property type="match status" value="1"/>
</dbReference>
<dbReference type="CDD" id="cd01890">
    <property type="entry name" value="LepA"/>
    <property type="match status" value="1"/>
</dbReference>
<dbReference type="CDD" id="cd03709">
    <property type="entry name" value="lepA_C"/>
    <property type="match status" value="1"/>
</dbReference>
<dbReference type="FunFam" id="3.40.50.300:FF:000078">
    <property type="entry name" value="Elongation factor 4"/>
    <property type="match status" value="1"/>
</dbReference>
<dbReference type="FunFam" id="2.40.30.10:FF:000015">
    <property type="entry name" value="Translation factor GUF1, mitochondrial"/>
    <property type="match status" value="1"/>
</dbReference>
<dbReference type="FunFam" id="3.30.70.240:FF:000007">
    <property type="entry name" value="Translation factor GUF1, mitochondrial"/>
    <property type="match status" value="1"/>
</dbReference>
<dbReference type="FunFam" id="3.30.70.2570:FF:000001">
    <property type="entry name" value="Translation factor GUF1, mitochondrial"/>
    <property type="match status" value="1"/>
</dbReference>
<dbReference type="FunFam" id="3.30.70.870:FF:000004">
    <property type="entry name" value="Translation factor GUF1, mitochondrial"/>
    <property type="match status" value="1"/>
</dbReference>
<dbReference type="Gene3D" id="3.30.70.240">
    <property type="match status" value="1"/>
</dbReference>
<dbReference type="Gene3D" id="3.30.70.2570">
    <property type="entry name" value="Elongation factor 4, C-terminal domain"/>
    <property type="match status" value="1"/>
</dbReference>
<dbReference type="Gene3D" id="3.30.70.870">
    <property type="entry name" value="Elongation Factor G (Translational Gtpase), domain 3"/>
    <property type="match status" value="1"/>
</dbReference>
<dbReference type="Gene3D" id="3.40.50.300">
    <property type="entry name" value="P-loop containing nucleotide triphosphate hydrolases"/>
    <property type="match status" value="1"/>
</dbReference>
<dbReference type="Gene3D" id="2.40.30.10">
    <property type="entry name" value="Translation factors"/>
    <property type="match status" value="1"/>
</dbReference>
<dbReference type="HAMAP" id="MF_00071">
    <property type="entry name" value="LepA"/>
    <property type="match status" value="1"/>
</dbReference>
<dbReference type="InterPro" id="IPR006297">
    <property type="entry name" value="EF-4"/>
</dbReference>
<dbReference type="InterPro" id="IPR035647">
    <property type="entry name" value="EFG_III/V"/>
</dbReference>
<dbReference type="InterPro" id="IPR000640">
    <property type="entry name" value="EFG_V-like"/>
</dbReference>
<dbReference type="InterPro" id="IPR004161">
    <property type="entry name" value="EFTu-like_2"/>
</dbReference>
<dbReference type="InterPro" id="IPR031157">
    <property type="entry name" value="G_TR_CS"/>
</dbReference>
<dbReference type="InterPro" id="IPR038363">
    <property type="entry name" value="LepA_C_sf"/>
</dbReference>
<dbReference type="InterPro" id="IPR013842">
    <property type="entry name" value="LepA_CTD"/>
</dbReference>
<dbReference type="InterPro" id="IPR035654">
    <property type="entry name" value="LepA_IV"/>
</dbReference>
<dbReference type="InterPro" id="IPR027417">
    <property type="entry name" value="P-loop_NTPase"/>
</dbReference>
<dbReference type="InterPro" id="IPR005225">
    <property type="entry name" value="Small_GTP-bd"/>
</dbReference>
<dbReference type="InterPro" id="IPR000795">
    <property type="entry name" value="T_Tr_GTP-bd_dom"/>
</dbReference>
<dbReference type="InterPro" id="IPR009000">
    <property type="entry name" value="Transl_B-barrel_sf"/>
</dbReference>
<dbReference type="NCBIfam" id="TIGR01393">
    <property type="entry name" value="lepA"/>
    <property type="match status" value="1"/>
</dbReference>
<dbReference type="NCBIfam" id="TIGR00231">
    <property type="entry name" value="small_GTP"/>
    <property type="match status" value="1"/>
</dbReference>
<dbReference type="PANTHER" id="PTHR43512:SF4">
    <property type="entry name" value="TRANSLATION FACTOR GUF1 HOMOLOG, CHLOROPLASTIC"/>
    <property type="match status" value="1"/>
</dbReference>
<dbReference type="PANTHER" id="PTHR43512">
    <property type="entry name" value="TRANSLATION FACTOR GUF1-RELATED"/>
    <property type="match status" value="1"/>
</dbReference>
<dbReference type="Pfam" id="PF00679">
    <property type="entry name" value="EFG_C"/>
    <property type="match status" value="1"/>
</dbReference>
<dbReference type="Pfam" id="PF00009">
    <property type="entry name" value="GTP_EFTU"/>
    <property type="match status" value="1"/>
</dbReference>
<dbReference type="Pfam" id="PF03144">
    <property type="entry name" value="GTP_EFTU_D2"/>
    <property type="match status" value="1"/>
</dbReference>
<dbReference type="Pfam" id="PF06421">
    <property type="entry name" value="LepA_C"/>
    <property type="match status" value="1"/>
</dbReference>
<dbReference type="PRINTS" id="PR00315">
    <property type="entry name" value="ELONGATNFCT"/>
</dbReference>
<dbReference type="SMART" id="SM00838">
    <property type="entry name" value="EFG_C"/>
    <property type="match status" value="1"/>
</dbReference>
<dbReference type="SUPFAM" id="SSF54980">
    <property type="entry name" value="EF-G C-terminal domain-like"/>
    <property type="match status" value="2"/>
</dbReference>
<dbReference type="SUPFAM" id="SSF52540">
    <property type="entry name" value="P-loop containing nucleoside triphosphate hydrolases"/>
    <property type="match status" value="1"/>
</dbReference>
<dbReference type="SUPFAM" id="SSF50447">
    <property type="entry name" value="Translation proteins"/>
    <property type="match status" value="1"/>
</dbReference>
<dbReference type="PROSITE" id="PS00301">
    <property type="entry name" value="G_TR_1"/>
    <property type="match status" value="1"/>
</dbReference>
<dbReference type="PROSITE" id="PS51722">
    <property type="entry name" value="G_TR_2"/>
    <property type="match status" value="1"/>
</dbReference>
<sequence>MTDKEKRLERQSRIRNFSIIAHIDHGKSTLADRILEKTSAITQREMKEQLLDSMDLERERGITIKLNSVQLKYKAKDGEEYIFHLIDTPGHVDFTYEVSRSLAACEGAILVVDAAQGIEAQTLANVYLALDNDLEILPVINKIDLPSAEPERVRQEVEDVIGLDASEAVLASAKAGIGIEEILEQIVEKVPAPTGDPEAPLKALIFDSLYDAYRGVVAYIRVVEGTVKPGQKIKMMATGKEFEVTEVGVFTPKATPTNELTVGDVGFLTASIKNVGDTRVGDTITSAANPAEEALPGYRKLNPMVYCGLYPIDTAKYNDLREALEKLELNDSSLQYEAETSQALGFGFRCGFLGMLHMEIIQERIEREFNIDLITTAPSVIYDVYMTDGEKVVVDNPSNMPDPQKIERVEEPYVKATMMVPNDYVGAVMELCQGKRGNFIDMQYLDANRVSIIYDMPLAEIVYEFFDQLKSSTKGYASFDYELIGYKPSKLVKMDIMLNGEKIDALSFIVHRDYAYERGKVIVEKLKELIPRQQFEVPVQAAIGQKIVARSTIKAMRKNVLAKCYGGDISRKRKLLEKQKEGKRRMKQVGSVEVPQEAFMAVLKMDDSPKKQ</sequence>
<accession>P37949</accession>